<sequence length="327" mass="35135">MAMTTDVKDELSRLVVKSVSARRAEVTSLLRFAGGLHIVGGRVVVEAELDLGSIARRLRKEIFELYGYTAVVHVLSASGIRKSTRYVLRVANDGEALARQTGLLDMRGRPVRGLPAQVVGGSIDDAEAAWRGAFLAHGSLTEPGRSSALEVSCPGPEAALALVGAARRLGVGAKAREVRGADRVVVRDGEAIGALLTRMGAQDTRLVWEERRLRREVRATANRLANFDDANLRRSARAAVAAAARVERALEILGDTVPEHLASAGKLRVEHRQASLEELGRLADPPMTKDAVAGRIRRLLSMADRKAKVDGIPDTESVVTPDLLEDA</sequence>
<name>WHIA_MYCTA</name>
<organism>
    <name type="scientific">Mycobacterium tuberculosis (strain ATCC 25177 / H37Ra)</name>
    <dbReference type="NCBI Taxonomy" id="419947"/>
    <lineage>
        <taxon>Bacteria</taxon>
        <taxon>Bacillati</taxon>
        <taxon>Actinomycetota</taxon>
        <taxon>Actinomycetes</taxon>
        <taxon>Mycobacteriales</taxon>
        <taxon>Mycobacteriaceae</taxon>
        <taxon>Mycobacterium</taxon>
        <taxon>Mycobacterium tuberculosis complex</taxon>
    </lineage>
</organism>
<accession>A5U2C5</accession>
<comment type="function">
    <text evidence="1">Involved in cell division and chromosome segregation.</text>
</comment>
<comment type="similarity">
    <text evidence="1">Belongs to the WhiA family.</text>
</comment>
<comment type="sequence caution" evidence="2">
    <conflict type="erroneous initiation">
        <sequence resource="EMBL-CDS" id="ABQ73175"/>
    </conflict>
    <text>Truncated N-terminus.</text>
</comment>
<keyword id="KW-0131">Cell cycle</keyword>
<keyword id="KW-0132">Cell division</keyword>
<keyword id="KW-0238">DNA-binding</keyword>
<keyword id="KW-1185">Reference proteome</keyword>
<dbReference type="EMBL" id="CP000611">
    <property type="protein sequence ID" value="ABQ73175.1"/>
    <property type="status" value="ALT_INIT"/>
    <property type="molecule type" value="Genomic_DNA"/>
</dbReference>
<dbReference type="SMR" id="A5U2C5"/>
<dbReference type="KEGG" id="mra:MRA_1432"/>
<dbReference type="eggNOG" id="COG1481">
    <property type="taxonomic scope" value="Bacteria"/>
</dbReference>
<dbReference type="HOGENOM" id="CLU_053282_0_0_11"/>
<dbReference type="Proteomes" id="UP000001988">
    <property type="component" value="Chromosome"/>
</dbReference>
<dbReference type="GO" id="GO:0003677">
    <property type="term" value="F:DNA binding"/>
    <property type="evidence" value="ECO:0007669"/>
    <property type="project" value="UniProtKB-UniRule"/>
</dbReference>
<dbReference type="GO" id="GO:0051301">
    <property type="term" value="P:cell division"/>
    <property type="evidence" value="ECO:0007669"/>
    <property type="project" value="UniProtKB-UniRule"/>
</dbReference>
<dbReference type="GO" id="GO:0043937">
    <property type="term" value="P:regulation of sporulation"/>
    <property type="evidence" value="ECO:0007669"/>
    <property type="project" value="InterPro"/>
</dbReference>
<dbReference type="FunFam" id="3.10.28.10:FF:000001">
    <property type="entry name" value="Probable cell division protein WhiA"/>
    <property type="match status" value="1"/>
</dbReference>
<dbReference type="Gene3D" id="3.10.28.10">
    <property type="entry name" value="Homing endonucleases"/>
    <property type="match status" value="1"/>
</dbReference>
<dbReference type="HAMAP" id="MF_01420">
    <property type="entry name" value="HTH_type_WhiA"/>
    <property type="match status" value="1"/>
</dbReference>
<dbReference type="InterPro" id="IPR027434">
    <property type="entry name" value="Homing_endonucl"/>
</dbReference>
<dbReference type="InterPro" id="IPR018478">
    <property type="entry name" value="Sporu_reg_WhiA_N_dom"/>
</dbReference>
<dbReference type="InterPro" id="IPR003802">
    <property type="entry name" value="Sporulation_regulator_WhiA"/>
</dbReference>
<dbReference type="InterPro" id="IPR023054">
    <property type="entry name" value="Sporulation_regulator_WhiA_C"/>
</dbReference>
<dbReference type="InterPro" id="IPR039518">
    <property type="entry name" value="WhiA_LAGLIDADG_dom"/>
</dbReference>
<dbReference type="NCBIfam" id="TIGR00647">
    <property type="entry name" value="DNA_bind_WhiA"/>
    <property type="match status" value="1"/>
</dbReference>
<dbReference type="PANTHER" id="PTHR37307">
    <property type="entry name" value="CELL DIVISION PROTEIN WHIA-RELATED"/>
    <property type="match status" value="1"/>
</dbReference>
<dbReference type="PANTHER" id="PTHR37307:SF1">
    <property type="entry name" value="CELL DIVISION PROTEIN WHIA-RELATED"/>
    <property type="match status" value="1"/>
</dbReference>
<dbReference type="Pfam" id="PF02650">
    <property type="entry name" value="HTH_WhiA"/>
    <property type="match status" value="1"/>
</dbReference>
<dbReference type="Pfam" id="PF14527">
    <property type="entry name" value="LAGLIDADG_WhiA"/>
    <property type="match status" value="1"/>
</dbReference>
<dbReference type="Pfam" id="PF10298">
    <property type="entry name" value="WhiA_N"/>
    <property type="match status" value="1"/>
</dbReference>
<feature type="chain" id="PRO_0000376535" description="Probable cell division protein WhiA">
    <location>
        <begin position="1"/>
        <end position="327"/>
    </location>
</feature>
<feature type="DNA-binding region" description="H-T-H motif" evidence="1">
    <location>
        <begin position="275"/>
        <end position="308"/>
    </location>
</feature>
<protein>
    <recommendedName>
        <fullName evidence="1">Probable cell division protein WhiA</fullName>
    </recommendedName>
</protein>
<proteinExistence type="inferred from homology"/>
<gene>
    <name evidence="1" type="primary">whiA</name>
    <name type="ordered locus">MRA_1432</name>
</gene>
<reference key="1">
    <citation type="journal article" date="2008" name="PLoS ONE">
        <title>Genetic basis of virulence attenuation revealed by comparative genomic analysis of Mycobacterium tuberculosis strain H37Ra versus H37Rv.</title>
        <authorList>
            <person name="Zheng H."/>
            <person name="Lu L."/>
            <person name="Wang B."/>
            <person name="Pu S."/>
            <person name="Zhang X."/>
            <person name="Zhu G."/>
            <person name="Shi W."/>
            <person name="Zhang L."/>
            <person name="Wang H."/>
            <person name="Wang S."/>
            <person name="Zhao G."/>
            <person name="Zhang Y."/>
        </authorList>
    </citation>
    <scope>NUCLEOTIDE SEQUENCE [LARGE SCALE GENOMIC DNA]</scope>
    <source>
        <strain>ATCC 25177 / H37Ra</strain>
    </source>
</reference>
<evidence type="ECO:0000255" key="1">
    <source>
        <dbReference type="HAMAP-Rule" id="MF_01420"/>
    </source>
</evidence>
<evidence type="ECO:0000305" key="2"/>